<protein>
    <recommendedName>
        <fullName evidence="1">tRNA (guanine-N(1)-)-methyltransferase</fullName>
        <ecNumber evidence="1">2.1.1.228</ecNumber>
    </recommendedName>
    <alternativeName>
        <fullName evidence="1">M1G-methyltransferase</fullName>
    </alternativeName>
    <alternativeName>
        <fullName evidence="1">tRNA [GM37] methyltransferase</fullName>
    </alternativeName>
</protein>
<keyword id="KW-0963">Cytoplasm</keyword>
<keyword id="KW-0489">Methyltransferase</keyword>
<keyword id="KW-0949">S-adenosyl-L-methionine</keyword>
<keyword id="KW-0808">Transferase</keyword>
<keyword id="KW-0819">tRNA processing</keyword>
<comment type="function">
    <text evidence="1">Specifically methylates guanosine-37 in various tRNAs.</text>
</comment>
<comment type="catalytic activity">
    <reaction evidence="1">
        <text>guanosine(37) in tRNA + S-adenosyl-L-methionine = N(1)-methylguanosine(37) in tRNA + S-adenosyl-L-homocysteine + H(+)</text>
        <dbReference type="Rhea" id="RHEA:36899"/>
        <dbReference type="Rhea" id="RHEA-COMP:10145"/>
        <dbReference type="Rhea" id="RHEA-COMP:10147"/>
        <dbReference type="ChEBI" id="CHEBI:15378"/>
        <dbReference type="ChEBI" id="CHEBI:57856"/>
        <dbReference type="ChEBI" id="CHEBI:59789"/>
        <dbReference type="ChEBI" id="CHEBI:73542"/>
        <dbReference type="ChEBI" id="CHEBI:74269"/>
        <dbReference type="EC" id="2.1.1.228"/>
    </reaction>
</comment>
<comment type="subunit">
    <text evidence="1">Homodimer.</text>
</comment>
<comment type="subcellular location">
    <subcellularLocation>
        <location evidence="1">Cytoplasm</location>
    </subcellularLocation>
</comment>
<comment type="similarity">
    <text evidence="1">Belongs to the RNA methyltransferase TrmD family.</text>
</comment>
<organism>
    <name type="scientific">Serratia proteamaculans (strain 568)</name>
    <dbReference type="NCBI Taxonomy" id="399741"/>
    <lineage>
        <taxon>Bacteria</taxon>
        <taxon>Pseudomonadati</taxon>
        <taxon>Pseudomonadota</taxon>
        <taxon>Gammaproteobacteria</taxon>
        <taxon>Enterobacterales</taxon>
        <taxon>Yersiniaceae</taxon>
        <taxon>Serratia</taxon>
    </lineage>
</organism>
<reference key="1">
    <citation type="submission" date="2007-09" db="EMBL/GenBank/DDBJ databases">
        <title>Complete sequence of chromosome of Serratia proteamaculans 568.</title>
        <authorList>
            <consortium name="US DOE Joint Genome Institute"/>
            <person name="Copeland A."/>
            <person name="Lucas S."/>
            <person name="Lapidus A."/>
            <person name="Barry K."/>
            <person name="Glavina del Rio T."/>
            <person name="Dalin E."/>
            <person name="Tice H."/>
            <person name="Pitluck S."/>
            <person name="Chain P."/>
            <person name="Malfatti S."/>
            <person name="Shin M."/>
            <person name="Vergez L."/>
            <person name="Schmutz J."/>
            <person name="Larimer F."/>
            <person name="Land M."/>
            <person name="Hauser L."/>
            <person name="Kyrpides N."/>
            <person name="Kim E."/>
            <person name="Taghavi S."/>
            <person name="Newman L."/>
            <person name="Vangronsveld J."/>
            <person name="van der Lelie D."/>
            <person name="Richardson P."/>
        </authorList>
    </citation>
    <scope>NUCLEOTIDE SEQUENCE [LARGE SCALE GENOMIC DNA]</scope>
    <source>
        <strain>568</strain>
    </source>
</reference>
<sequence length="255" mass="28413">MFIGIVSLFPEMFRAITDYGVTGRAVKNGLLSVQCWSPRDFTYDRHRTVDDRPYGGGPGMLMMVQPLREAIHAAKAAAGEGAKVIYLSPQGRKLDQTGVCELAANPKMILVCGRYEGVDERVIQTEIDEEWSIGDYVLSGGELPAMTLIDSVARFIPGVLGHQASAEEDSFADGLLDCPHYTRPEVLEGMEVPPVLLSGNHAEIRRWRLKQSLGRTWLRRPELLESLALTDEQAVLLAEFQREHQTKQQDYEGNV</sequence>
<accession>A8GA20</accession>
<proteinExistence type="inferred from homology"/>
<evidence type="ECO:0000255" key="1">
    <source>
        <dbReference type="HAMAP-Rule" id="MF_00605"/>
    </source>
</evidence>
<feature type="chain" id="PRO_1000061274" description="tRNA (guanine-N(1)-)-methyltransferase">
    <location>
        <begin position="1"/>
        <end position="255"/>
    </location>
</feature>
<feature type="binding site" evidence="1">
    <location>
        <position position="113"/>
    </location>
    <ligand>
        <name>S-adenosyl-L-methionine</name>
        <dbReference type="ChEBI" id="CHEBI:59789"/>
    </ligand>
</feature>
<feature type="binding site" evidence="1">
    <location>
        <begin position="133"/>
        <end position="138"/>
    </location>
    <ligand>
        <name>S-adenosyl-L-methionine</name>
        <dbReference type="ChEBI" id="CHEBI:59789"/>
    </ligand>
</feature>
<gene>
    <name evidence="1" type="primary">trmD</name>
    <name type="ordered locus">Spro_0854</name>
</gene>
<dbReference type="EC" id="2.1.1.228" evidence="1"/>
<dbReference type="EMBL" id="CP000826">
    <property type="protein sequence ID" value="ABV39960.1"/>
    <property type="molecule type" value="Genomic_DNA"/>
</dbReference>
<dbReference type="SMR" id="A8GA20"/>
<dbReference type="STRING" id="399741.Spro_0854"/>
<dbReference type="KEGG" id="spe:Spro_0854"/>
<dbReference type="eggNOG" id="COG0336">
    <property type="taxonomic scope" value="Bacteria"/>
</dbReference>
<dbReference type="HOGENOM" id="CLU_047363_0_1_6"/>
<dbReference type="OrthoDB" id="9807416at2"/>
<dbReference type="GO" id="GO:0005829">
    <property type="term" value="C:cytosol"/>
    <property type="evidence" value="ECO:0007669"/>
    <property type="project" value="TreeGrafter"/>
</dbReference>
<dbReference type="GO" id="GO:0052906">
    <property type="term" value="F:tRNA (guanine(37)-N1)-methyltransferase activity"/>
    <property type="evidence" value="ECO:0007669"/>
    <property type="project" value="UniProtKB-UniRule"/>
</dbReference>
<dbReference type="GO" id="GO:0002939">
    <property type="term" value="P:tRNA N1-guanine methylation"/>
    <property type="evidence" value="ECO:0007669"/>
    <property type="project" value="TreeGrafter"/>
</dbReference>
<dbReference type="CDD" id="cd18080">
    <property type="entry name" value="TrmD-like"/>
    <property type="match status" value="1"/>
</dbReference>
<dbReference type="FunFam" id="1.10.1270.20:FF:000001">
    <property type="entry name" value="tRNA (guanine-N(1)-)-methyltransferase"/>
    <property type="match status" value="1"/>
</dbReference>
<dbReference type="FunFam" id="3.40.1280.10:FF:000001">
    <property type="entry name" value="tRNA (guanine-N(1)-)-methyltransferase"/>
    <property type="match status" value="1"/>
</dbReference>
<dbReference type="Gene3D" id="3.40.1280.10">
    <property type="match status" value="1"/>
</dbReference>
<dbReference type="Gene3D" id="1.10.1270.20">
    <property type="entry name" value="tRNA(m1g37)methyltransferase, domain 2"/>
    <property type="match status" value="1"/>
</dbReference>
<dbReference type="HAMAP" id="MF_00605">
    <property type="entry name" value="TrmD"/>
    <property type="match status" value="1"/>
</dbReference>
<dbReference type="InterPro" id="IPR029028">
    <property type="entry name" value="Alpha/beta_knot_MTases"/>
</dbReference>
<dbReference type="InterPro" id="IPR023148">
    <property type="entry name" value="tRNA_m1G_MeTrfase_C_sf"/>
</dbReference>
<dbReference type="InterPro" id="IPR002649">
    <property type="entry name" value="tRNA_m1G_MeTrfase_TrmD"/>
</dbReference>
<dbReference type="InterPro" id="IPR029026">
    <property type="entry name" value="tRNA_m1G_MTases_N"/>
</dbReference>
<dbReference type="InterPro" id="IPR016009">
    <property type="entry name" value="tRNA_MeTrfase_TRMD/TRM10"/>
</dbReference>
<dbReference type="NCBIfam" id="NF000648">
    <property type="entry name" value="PRK00026.1"/>
    <property type="match status" value="1"/>
</dbReference>
<dbReference type="NCBIfam" id="TIGR00088">
    <property type="entry name" value="trmD"/>
    <property type="match status" value="1"/>
</dbReference>
<dbReference type="PANTHER" id="PTHR46417">
    <property type="entry name" value="TRNA (GUANINE-N(1)-)-METHYLTRANSFERASE"/>
    <property type="match status" value="1"/>
</dbReference>
<dbReference type="PANTHER" id="PTHR46417:SF1">
    <property type="entry name" value="TRNA (GUANINE-N(1)-)-METHYLTRANSFERASE"/>
    <property type="match status" value="1"/>
</dbReference>
<dbReference type="Pfam" id="PF01746">
    <property type="entry name" value="tRNA_m1G_MT"/>
    <property type="match status" value="1"/>
</dbReference>
<dbReference type="PIRSF" id="PIRSF000386">
    <property type="entry name" value="tRNA_mtase"/>
    <property type="match status" value="1"/>
</dbReference>
<dbReference type="SUPFAM" id="SSF75217">
    <property type="entry name" value="alpha/beta knot"/>
    <property type="match status" value="1"/>
</dbReference>
<name>TRMD_SERP5</name>